<name>CH602_RHOBA</name>
<comment type="function">
    <text evidence="1">Together with its co-chaperonin GroES, plays an essential role in assisting protein folding. The GroEL-GroES system forms a nano-cage that allows encapsulation of the non-native substrate proteins and provides a physical environment optimized to promote and accelerate protein folding.</text>
</comment>
<comment type="catalytic activity">
    <reaction evidence="1">
        <text>ATP + H2O + a folded polypeptide = ADP + phosphate + an unfolded polypeptide.</text>
        <dbReference type="EC" id="5.6.1.7"/>
    </reaction>
</comment>
<comment type="subunit">
    <text evidence="1">Forms a cylinder of 14 subunits composed of two heptameric rings stacked back-to-back. Interacts with the co-chaperonin GroES.</text>
</comment>
<comment type="subcellular location">
    <subcellularLocation>
        <location evidence="1">Cytoplasm</location>
    </subcellularLocation>
</comment>
<comment type="similarity">
    <text evidence="1">Belongs to the chaperonin (HSP60) family.</text>
</comment>
<protein>
    <recommendedName>
        <fullName evidence="1">Chaperonin GroEL 2</fullName>
        <ecNumber evidence="1">5.6.1.7</ecNumber>
    </recommendedName>
    <alternativeName>
        <fullName evidence="1">60 kDa chaperonin 2</fullName>
    </alternativeName>
    <alternativeName>
        <fullName evidence="1">Chaperonin-60 2</fullName>
        <shortName evidence="1">Cpn60 2</shortName>
    </alternativeName>
</protein>
<proteinExistence type="inferred from homology"/>
<sequence length="540" mass="57549">MAKQLLFEDHARARMLAGVEKLAKAVATTMGPTGRNVIIDKSFGGPTVTKDGVTVAKEIELEDRFENMGAKLVIEVAQKTSDLAGDGTTTATVLARAIFKEGLRNIVAGSNPTAIRRGIEKAVEAACDQLVEMGRPVSGKQEVAHVGAISANNDNVIGELLADALERVGKDGVITVEEGKSRNTEVEYVDGMQFDKGYVSPYFITDSSTMEASLEDALVLLYEKKVSNIRDLVPLLEKTAQTGQPLLIIAEDVDAEALTLLVVNKLRGTLNVCAVKAPGFGDRRKAMLGDIATLTGGTLISEDLGMQLENVTLEHLGRAKKVTVDKSNTTIVEGAGKREDIDKRVAQIRAQIEQTDSDYDKEKFQERLAKLAGGVAVISVGAETEAEMKQTKARLEDALHATRAAVEEGILPGGGVALVHCREAVEAAKKKAKGDEKIGVDIVLGALDAPMRQIADNGGIDGSVVVDEVLQKNDPKIGFNAHTGEYTDMVKAGVIDPVKVVRTALTNAASIAGLLLTTEALVTNFEQEDKDKRPVEGMVS</sequence>
<accession>Q7UM97</accession>
<feature type="chain" id="PRO_0000063506" description="Chaperonin GroEL 2">
    <location>
        <begin position="1"/>
        <end position="540"/>
    </location>
</feature>
<feature type="binding site" evidence="1">
    <location>
        <begin position="29"/>
        <end position="32"/>
    </location>
    <ligand>
        <name>ATP</name>
        <dbReference type="ChEBI" id="CHEBI:30616"/>
    </ligand>
</feature>
<feature type="binding site" evidence="1">
    <location>
        <position position="50"/>
    </location>
    <ligand>
        <name>ATP</name>
        <dbReference type="ChEBI" id="CHEBI:30616"/>
    </ligand>
</feature>
<feature type="binding site" evidence="1">
    <location>
        <begin position="86"/>
        <end position="90"/>
    </location>
    <ligand>
        <name>ATP</name>
        <dbReference type="ChEBI" id="CHEBI:30616"/>
    </ligand>
</feature>
<feature type="binding site" evidence="1">
    <location>
        <position position="414"/>
    </location>
    <ligand>
        <name>ATP</name>
        <dbReference type="ChEBI" id="CHEBI:30616"/>
    </ligand>
</feature>
<feature type="binding site" evidence="1">
    <location>
        <position position="496"/>
    </location>
    <ligand>
        <name>ATP</name>
        <dbReference type="ChEBI" id="CHEBI:30616"/>
    </ligand>
</feature>
<gene>
    <name evidence="1" type="primary">groEL2</name>
    <name evidence="1" type="synonym">groL2</name>
    <name type="ordered locus">RB8970</name>
</gene>
<reference key="1">
    <citation type="journal article" date="2003" name="Proc. Natl. Acad. Sci. U.S.A.">
        <title>Complete genome sequence of the marine planctomycete Pirellula sp. strain 1.</title>
        <authorList>
            <person name="Gloeckner F.O."/>
            <person name="Kube M."/>
            <person name="Bauer M."/>
            <person name="Teeling H."/>
            <person name="Lombardot T."/>
            <person name="Ludwig W."/>
            <person name="Gade D."/>
            <person name="Beck A."/>
            <person name="Borzym K."/>
            <person name="Heitmann K."/>
            <person name="Rabus R."/>
            <person name="Schlesner H."/>
            <person name="Amann R."/>
            <person name="Reinhardt R."/>
        </authorList>
    </citation>
    <scope>NUCLEOTIDE SEQUENCE [LARGE SCALE GENOMIC DNA]</scope>
    <source>
        <strain>DSM 10527 / NCIMB 13988 / SH1</strain>
    </source>
</reference>
<dbReference type="EC" id="5.6.1.7" evidence="1"/>
<dbReference type="EMBL" id="BX294148">
    <property type="protein sequence ID" value="CAD76020.1"/>
    <property type="molecule type" value="Genomic_DNA"/>
</dbReference>
<dbReference type="RefSeq" id="NP_868643.1">
    <property type="nucleotide sequence ID" value="NC_005027.1"/>
</dbReference>
<dbReference type="RefSeq" id="WP_007330146.1">
    <property type="nucleotide sequence ID" value="NC_005027.1"/>
</dbReference>
<dbReference type="SMR" id="Q7UM97"/>
<dbReference type="STRING" id="243090.RB8970"/>
<dbReference type="EnsemblBacteria" id="CAD76020">
    <property type="protein sequence ID" value="CAD76020"/>
    <property type="gene ID" value="RB8970"/>
</dbReference>
<dbReference type="KEGG" id="rba:RB8970"/>
<dbReference type="PATRIC" id="fig|243090.15.peg.4303"/>
<dbReference type="eggNOG" id="COG0459">
    <property type="taxonomic scope" value="Bacteria"/>
</dbReference>
<dbReference type="HOGENOM" id="CLU_016503_3_0_0"/>
<dbReference type="InParanoid" id="Q7UM97"/>
<dbReference type="OrthoDB" id="9766614at2"/>
<dbReference type="Proteomes" id="UP000001025">
    <property type="component" value="Chromosome"/>
</dbReference>
<dbReference type="GO" id="GO:1990220">
    <property type="term" value="C:GroEL-GroES complex"/>
    <property type="evidence" value="ECO:0000318"/>
    <property type="project" value="GO_Central"/>
</dbReference>
<dbReference type="GO" id="GO:0005524">
    <property type="term" value="F:ATP binding"/>
    <property type="evidence" value="ECO:0000318"/>
    <property type="project" value="GO_Central"/>
</dbReference>
<dbReference type="GO" id="GO:0140662">
    <property type="term" value="F:ATP-dependent protein folding chaperone"/>
    <property type="evidence" value="ECO:0007669"/>
    <property type="project" value="InterPro"/>
</dbReference>
<dbReference type="GO" id="GO:0016853">
    <property type="term" value="F:isomerase activity"/>
    <property type="evidence" value="ECO:0007669"/>
    <property type="project" value="UniProtKB-KW"/>
</dbReference>
<dbReference type="GO" id="GO:0051082">
    <property type="term" value="F:unfolded protein binding"/>
    <property type="evidence" value="ECO:0000318"/>
    <property type="project" value="GO_Central"/>
</dbReference>
<dbReference type="GO" id="GO:0051085">
    <property type="term" value="P:chaperone cofactor-dependent protein refolding"/>
    <property type="evidence" value="ECO:0000318"/>
    <property type="project" value="GO_Central"/>
</dbReference>
<dbReference type="GO" id="GO:0042026">
    <property type="term" value="P:protein refolding"/>
    <property type="evidence" value="ECO:0007669"/>
    <property type="project" value="UniProtKB-UniRule"/>
</dbReference>
<dbReference type="GO" id="GO:0009408">
    <property type="term" value="P:response to heat"/>
    <property type="evidence" value="ECO:0000318"/>
    <property type="project" value="GO_Central"/>
</dbReference>
<dbReference type="CDD" id="cd03344">
    <property type="entry name" value="GroEL"/>
    <property type="match status" value="1"/>
</dbReference>
<dbReference type="FunFam" id="3.50.7.10:FF:000001">
    <property type="entry name" value="60 kDa chaperonin"/>
    <property type="match status" value="1"/>
</dbReference>
<dbReference type="Gene3D" id="3.50.7.10">
    <property type="entry name" value="GroEL"/>
    <property type="match status" value="1"/>
</dbReference>
<dbReference type="Gene3D" id="1.10.560.10">
    <property type="entry name" value="GroEL-like equatorial domain"/>
    <property type="match status" value="1"/>
</dbReference>
<dbReference type="Gene3D" id="3.30.260.10">
    <property type="entry name" value="TCP-1-like chaperonin intermediate domain"/>
    <property type="match status" value="1"/>
</dbReference>
<dbReference type="HAMAP" id="MF_00600">
    <property type="entry name" value="CH60"/>
    <property type="match status" value="1"/>
</dbReference>
<dbReference type="InterPro" id="IPR018370">
    <property type="entry name" value="Chaperonin_Cpn60_CS"/>
</dbReference>
<dbReference type="InterPro" id="IPR001844">
    <property type="entry name" value="Cpn60/GroEL"/>
</dbReference>
<dbReference type="InterPro" id="IPR002423">
    <property type="entry name" value="Cpn60/GroEL/TCP-1"/>
</dbReference>
<dbReference type="InterPro" id="IPR027409">
    <property type="entry name" value="GroEL-like_apical_dom_sf"/>
</dbReference>
<dbReference type="InterPro" id="IPR027413">
    <property type="entry name" value="GROEL-like_equatorial_sf"/>
</dbReference>
<dbReference type="InterPro" id="IPR027410">
    <property type="entry name" value="TCP-1-like_intermed_sf"/>
</dbReference>
<dbReference type="NCBIfam" id="TIGR02348">
    <property type="entry name" value="GroEL"/>
    <property type="match status" value="1"/>
</dbReference>
<dbReference type="NCBIfam" id="NF000592">
    <property type="entry name" value="PRK00013.1"/>
    <property type="match status" value="1"/>
</dbReference>
<dbReference type="NCBIfam" id="NF009487">
    <property type="entry name" value="PRK12849.1"/>
    <property type="match status" value="1"/>
</dbReference>
<dbReference type="NCBIfam" id="NF009488">
    <property type="entry name" value="PRK12850.1"/>
    <property type="match status" value="1"/>
</dbReference>
<dbReference type="NCBIfam" id="NF009489">
    <property type="entry name" value="PRK12851.1"/>
    <property type="match status" value="1"/>
</dbReference>
<dbReference type="PANTHER" id="PTHR45633">
    <property type="entry name" value="60 KDA HEAT SHOCK PROTEIN, MITOCHONDRIAL"/>
    <property type="match status" value="1"/>
</dbReference>
<dbReference type="Pfam" id="PF00118">
    <property type="entry name" value="Cpn60_TCP1"/>
    <property type="match status" value="1"/>
</dbReference>
<dbReference type="PRINTS" id="PR00298">
    <property type="entry name" value="CHAPERONIN60"/>
</dbReference>
<dbReference type="SUPFAM" id="SSF52029">
    <property type="entry name" value="GroEL apical domain-like"/>
    <property type="match status" value="1"/>
</dbReference>
<dbReference type="SUPFAM" id="SSF48592">
    <property type="entry name" value="GroEL equatorial domain-like"/>
    <property type="match status" value="1"/>
</dbReference>
<dbReference type="SUPFAM" id="SSF54849">
    <property type="entry name" value="GroEL-intermediate domain like"/>
    <property type="match status" value="1"/>
</dbReference>
<dbReference type="PROSITE" id="PS00296">
    <property type="entry name" value="CHAPERONINS_CPN60"/>
    <property type="match status" value="1"/>
</dbReference>
<organism>
    <name type="scientific">Rhodopirellula baltica (strain DSM 10527 / NCIMB 13988 / SH1)</name>
    <dbReference type="NCBI Taxonomy" id="243090"/>
    <lineage>
        <taxon>Bacteria</taxon>
        <taxon>Pseudomonadati</taxon>
        <taxon>Planctomycetota</taxon>
        <taxon>Planctomycetia</taxon>
        <taxon>Pirellulales</taxon>
        <taxon>Pirellulaceae</taxon>
        <taxon>Rhodopirellula</taxon>
    </lineage>
</organism>
<keyword id="KW-0067">ATP-binding</keyword>
<keyword id="KW-0143">Chaperone</keyword>
<keyword id="KW-0963">Cytoplasm</keyword>
<keyword id="KW-0413">Isomerase</keyword>
<keyword id="KW-0547">Nucleotide-binding</keyword>
<keyword id="KW-1185">Reference proteome</keyword>
<evidence type="ECO:0000255" key="1">
    <source>
        <dbReference type="HAMAP-Rule" id="MF_00600"/>
    </source>
</evidence>